<sequence length="498" mass="53238">MTYLLALDQGTSSSRSIVFDERGRIVAQAQRELPQIYPRPGWVEHDPREIWRTQLATAQDALREARITAQDVRALGITNQRETTVLWNRRTGQPVHHAIVWQDRRAEPACAQLREQGHAAAIQAKTGLLIDAYFSGTKLQWLLDHVPGARDAAEAGELAFGTVDSWLIWQLTGGTRHVTDVSNASRTMLFNVHTNQWDDELLQLLRIPRALMPEVLPSASDFGATDAALLGGPIAIGGVAGDQQSALFGQACFTAGMAKNTYGTGCFMLMHTGSRFQKSENGLLTTSAAQASRSPEYAMEGSVFVGGAVVQWLRDGLRAISASSEVQALAESVPDSGGVMMVPAFTGLGAPYWKPDARGTITGLTRGTTIAHIARAALESIAYQSAALLAAMSRDAVAAGGAPVSELRVDGGACVNDLLMQFQADLLGIPVVRPAVVETTALGAAYLAGLASGVYASTDELSALWQAERRFTPTLPRSQAEALMARWEHAVAQAVLPG</sequence>
<name>GLPK_ACIET</name>
<organism>
    <name type="scientific">Acidovorax ebreus (strain TPSY)</name>
    <name type="common">Diaphorobacter sp. (strain TPSY)</name>
    <dbReference type="NCBI Taxonomy" id="535289"/>
    <lineage>
        <taxon>Bacteria</taxon>
        <taxon>Pseudomonadati</taxon>
        <taxon>Pseudomonadota</taxon>
        <taxon>Betaproteobacteria</taxon>
        <taxon>Burkholderiales</taxon>
        <taxon>Comamonadaceae</taxon>
        <taxon>Diaphorobacter</taxon>
    </lineage>
</organism>
<feature type="chain" id="PRO_1000124191" description="Glycerol kinase">
    <location>
        <begin position="1"/>
        <end position="498"/>
    </location>
</feature>
<feature type="binding site" evidence="1">
    <location>
        <position position="11"/>
    </location>
    <ligand>
        <name>ADP</name>
        <dbReference type="ChEBI" id="CHEBI:456216"/>
    </ligand>
</feature>
<feature type="binding site" evidence="1">
    <location>
        <position position="11"/>
    </location>
    <ligand>
        <name>ATP</name>
        <dbReference type="ChEBI" id="CHEBI:30616"/>
    </ligand>
</feature>
<feature type="binding site" evidence="1">
    <location>
        <position position="11"/>
    </location>
    <ligand>
        <name>sn-glycerol 3-phosphate</name>
        <dbReference type="ChEBI" id="CHEBI:57597"/>
    </ligand>
</feature>
<feature type="binding site" evidence="1">
    <location>
        <position position="12"/>
    </location>
    <ligand>
        <name>ATP</name>
        <dbReference type="ChEBI" id="CHEBI:30616"/>
    </ligand>
</feature>
<feature type="binding site" evidence="1">
    <location>
        <position position="13"/>
    </location>
    <ligand>
        <name>ATP</name>
        <dbReference type="ChEBI" id="CHEBI:30616"/>
    </ligand>
</feature>
<feature type="binding site" evidence="1">
    <location>
        <position position="15"/>
    </location>
    <ligand>
        <name>ADP</name>
        <dbReference type="ChEBI" id="CHEBI:456216"/>
    </ligand>
</feature>
<feature type="binding site" evidence="1">
    <location>
        <position position="81"/>
    </location>
    <ligand>
        <name>glycerol</name>
        <dbReference type="ChEBI" id="CHEBI:17754"/>
    </ligand>
</feature>
<feature type="binding site" evidence="1">
    <location>
        <position position="81"/>
    </location>
    <ligand>
        <name>sn-glycerol 3-phosphate</name>
        <dbReference type="ChEBI" id="CHEBI:57597"/>
    </ligand>
</feature>
<feature type="binding site" evidence="1">
    <location>
        <position position="82"/>
    </location>
    <ligand>
        <name>glycerol</name>
        <dbReference type="ChEBI" id="CHEBI:17754"/>
    </ligand>
</feature>
<feature type="binding site" evidence="1">
    <location>
        <position position="82"/>
    </location>
    <ligand>
        <name>sn-glycerol 3-phosphate</name>
        <dbReference type="ChEBI" id="CHEBI:57597"/>
    </ligand>
</feature>
<feature type="binding site" evidence="1">
    <location>
        <position position="133"/>
    </location>
    <ligand>
        <name>glycerol</name>
        <dbReference type="ChEBI" id="CHEBI:17754"/>
    </ligand>
</feature>
<feature type="binding site" evidence="1">
    <location>
        <position position="133"/>
    </location>
    <ligand>
        <name>sn-glycerol 3-phosphate</name>
        <dbReference type="ChEBI" id="CHEBI:57597"/>
    </ligand>
</feature>
<feature type="binding site" evidence="1">
    <location>
        <position position="242"/>
    </location>
    <ligand>
        <name>glycerol</name>
        <dbReference type="ChEBI" id="CHEBI:17754"/>
    </ligand>
</feature>
<feature type="binding site" evidence="1">
    <location>
        <position position="242"/>
    </location>
    <ligand>
        <name>sn-glycerol 3-phosphate</name>
        <dbReference type="ChEBI" id="CHEBI:57597"/>
    </ligand>
</feature>
<feature type="binding site" evidence="1">
    <location>
        <position position="243"/>
    </location>
    <ligand>
        <name>glycerol</name>
        <dbReference type="ChEBI" id="CHEBI:17754"/>
    </ligand>
</feature>
<feature type="binding site" evidence="1">
    <location>
        <position position="264"/>
    </location>
    <ligand>
        <name>ADP</name>
        <dbReference type="ChEBI" id="CHEBI:456216"/>
    </ligand>
</feature>
<feature type="binding site" evidence="1">
    <location>
        <position position="264"/>
    </location>
    <ligand>
        <name>ATP</name>
        <dbReference type="ChEBI" id="CHEBI:30616"/>
    </ligand>
</feature>
<feature type="binding site" evidence="1">
    <location>
        <position position="307"/>
    </location>
    <ligand>
        <name>ADP</name>
        <dbReference type="ChEBI" id="CHEBI:456216"/>
    </ligand>
</feature>
<feature type="binding site" evidence="1">
    <location>
        <position position="307"/>
    </location>
    <ligand>
        <name>ATP</name>
        <dbReference type="ChEBI" id="CHEBI:30616"/>
    </ligand>
</feature>
<feature type="binding site" evidence="1">
    <location>
        <position position="311"/>
    </location>
    <ligand>
        <name>ATP</name>
        <dbReference type="ChEBI" id="CHEBI:30616"/>
    </ligand>
</feature>
<feature type="binding site" evidence="1">
    <location>
        <position position="412"/>
    </location>
    <ligand>
        <name>ADP</name>
        <dbReference type="ChEBI" id="CHEBI:456216"/>
    </ligand>
</feature>
<feature type="binding site" evidence="1">
    <location>
        <position position="412"/>
    </location>
    <ligand>
        <name>ATP</name>
        <dbReference type="ChEBI" id="CHEBI:30616"/>
    </ligand>
</feature>
<feature type="binding site" evidence="1">
    <location>
        <position position="416"/>
    </location>
    <ligand>
        <name>ADP</name>
        <dbReference type="ChEBI" id="CHEBI:456216"/>
    </ligand>
</feature>
<keyword id="KW-0067">ATP-binding</keyword>
<keyword id="KW-0319">Glycerol metabolism</keyword>
<keyword id="KW-0418">Kinase</keyword>
<keyword id="KW-0547">Nucleotide-binding</keyword>
<keyword id="KW-1185">Reference proteome</keyword>
<keyword id="KW-0808">Transferase</keyword>
<proteinExistence type="inferred from homology"/>
<accession>B9MBT7</accession>
<reference key="1">
    <citation type="submission" date="2009-01" db="EMBL/GenBank/DDBJ databases">
        <title>Complete sequence of Diaphorobacter sp. TPSY.</title>
        <authorList>
            <consortium name="US DOE Joint Genome Institute"/>
            <person name="Lucas S."/>
            <person name="Copeland A."/>
            <person name="Lapidus A."/>
            <person name="Glavina del Rio T."/>
            <person name="Tice H."/>
            <person name="Bruce D."/>
            <person name="Goodwin L."/>
            <person name="Pitluck S."/>
            <person name="Chertkov O."/>
            <person name="Brettin T."/>
            <person name="Detter J.C."/>
            <person name="Han C."/>
            <person name="Larimer F."/>
            <person name="Land M."/>
            <person name="Hauser L."/>
            <person name="Kyrpides N."/>
            <person name="Mikhailova N."/>
            <person name="Coates J.D."/>
        </authorList>
    </citation>
    <scope>NUCLEOTIDE SEQUENCE [LARGE SCALE GENOMIC DNA]</scope>
    <source>
        <strain>TPSY</strain>
    </source>
</reference>
<comment type="function">
    <text evidence="1">Key enzyme in the regulation of glycerol uptake and metabolism. Catalyzes the phosphorylation of glycerol to yield sn-glycerol 3-phosphate.</text>
</comment>
<comment type="catalytic activity">
    <reaction evidence="1">
        <text>glycerol + ATP = sn-glycerol 3-phosphate + ADP + H(+)</text>
        <dbReference type="Rhea" id="RHEA:21644"/>
        <dbReference type="ChEBI" id="CHEBI:15378"/>
        <dbReference type="ChEBI" id="CHEBI:17754"/>
        <dbReference type="ChEBI" id="CHEBI:30616"/>
        <dbReference type="ChEBI" id="CHEBI:57597"/>
        <dbReference type="ChEBI" id="CHEBI:456216"/>
        <dbReference type="EC" id="2.7.1.30"/>
    </reaction>
</comment>
<comment type="activity regulation">
    <text evidence="1">Inhibited by fructose 1,6-bisphosphate (FBP).</text>
</comment>
<comment type="pathway">
    <text evidence="1">Polyol metabolism; glycerol degradation via glycerol kinase pathway; sn-glycerol 3-phosphate from glycerol: step 1/1.</text>
</comment>
<comment type="similarity">
    <text evidence="1">Belongs to the FGGY kinase family.</text>
</comment>
<gene>
    <name evidence="1" type="primary">glpK</name>
    <name type="ordered locus">Dtpsy_0373</name>
</gene>
<dbReference type="EC" id="2.7.1.30" evidence="1"/>
<dbReference type="EMBL" id="CP001392">
    <property type="protein sequence ID" value="ACM31857.1"/>
    <property type="molecule type" value="Genomic_DNA"/>
</dbReference>
<dbReference type="RefSeq" id="WP_012655434.1">
    <property type="nucleotide sequence ID" value="NC_011992.1"/>
</dbReference>
<dbReference type="SMR" id="B9MBT7"/>
<dbReference type="KEGG" id="dia:Dtpsy_0373"/>
<dbReference type="eggNOG" id="COG0554">
    <property type="taxonomic scope" value="Bacteria"/>
</dbReference>
<dbReference type="HOGENOM" id="CLU_009281_2_3_4"/>
<dbReference type="UniPathway" id="UPA00618">
    <property type="reaction ID" value="UER00672"/>
</dbReference>
<dbReference type="Proteomes" id="UP000000450">
    <property type="component" value="Chromosome"/>
</dbReference>
<dbReference type="GO" id="GO:0005829">
    <property type="term" value="C:cytosol"/>
    <property type="evidence" value="ECO:0007669"/>
    <property type="project" value="TreeGrafter"/>
</dbReference>
<dbReference type="GO" id="GO:0005524">
    <property type="term" value="F:ATP binding"/>
    <property type="evidence" value="ECO:0007669"/>
    <property type="project" value="UniProtKB-UniRule"/>
</dbReference>
<dbReference type="GO" id="GO:0004370">
    <property type="term" value="F:glycerol kinase activity"/>
    <property type="evidence" value="ECO:0000250"/>
    <property type="project" value="UniProtKB"/>
</dbReference>
<dbReference type="GO" id="GO:0019563">
    <property type="term" value="P:glycerol catabolic process"/>
    <property type="evidence" value="ECO:0007669"/>
    <property type="project" value="UniProtKB-UniRule"/>
</dbReference>
<dbReference type="GO" id="GO:0006071">
    <property type="term" value="P:glycerol metabolic process"/>
    <property type="evidence" value="ECO:0000250"/>
    <property type="project" value="UniProtKB"/>
</dbReference>
<dbReference type="GO" id="GO:0006072">
    <property type="term" value="P:glycerol-3-phosphate metabolic process"/>
    <property type="evidence" value="ECO:0007669"/>
    <property type="project" value="InterPro"/>
</dbReference>
<dbReference type="CDD" id="cd07786">
    <property type="entry name" value="FGGY_EcGK_like"/>
    <property type="match status" value="1"/>
</dbReference>
<dbReference type="FunFam" id="3.30.420.40:FF:000007">
    <property type="entry name" value="Glycerol kinase"/>
    <property type="match status" value="1"/>
</dbReference>
<dbReference type="FunFam" id="3.30.420.40:FF:000008">
    <property type="entry name" value="Glycerol kinase"/>
    <property type="match status" value="1"/>
</dbReference>
<dbReference type="Gene3D" id="3.30.420.40">
    <property type="match status" value="2"/>
</dbReference>
<dbReference type="HAMAP" id="MF_00186">
    <property type="entry name" value="Glycerol_kin"/>
    <property type="match status" value="1"/>
</dbReference>
<dbReference type="InterPro" id="IPR043129">
    <property type="entry name" value="ATPase_NBD"/>
</dbReference>
<dbReference type="InterPro" id="IPR000577">
    <property type="entry name" value="Carb_kinase_FGGY"/>
</dbReference>
<dbReference type="InterPro" id="IPR018483">
    <property type="entry name" value="Carb_kinase_FGGY_CS"/>
</dbReference>
<dbReference type="InterPro" id="IPR018485">
    <property type="entry name" value="FGGY_C"/>
</dbReference>
<dbReference type="InterPro" id="IPR018484">
    <property type="entry name" value="FGGY_N"/>
</dbReference>
<dbReference type="InterPro" id="IPR005999">
    <property type="entry name" value="Glycerol_kin"/>
</dbReference>
<dbReference type="NCBIfam" id="TIGR01311">
    <property type="entry name" value="glycerol_kin"/>
    <property type="match status" value="1"/>
</dbReference>
<dbReference type="NCBIfam" id="NF000756">
    <property type="entry name" value="PRK00047.1"/>
    <property type="match status" value="1"/>
</dbReference>
<dbReference type="PANTHER" id="PTHR10196:SF69">
    <property type="entry name" value="GLYCEROL KINASE"/>
    <property type="match status" value="1"/>
</dbReference>
<dbReference type="PANTHER" id="PTHR10196">
    <property type="entry name" value="SUGAR KINASE"/>
    <property type="match status" value="1"/>
</dbReference>
<dbReference type="Pfam" id="PF02782">
    <property type="entry name" value="FGGY_C"/>
    <property type="match status" value="1"/>
</dbReference>
<dbReference type="Pfam" id="PF00370">
    <property type="entry name" value="FGGY_N"/>
    <property type="match status" value="1"/>
</dbReference>
<dbReference type="PIRSF" id="PIRSF000538">
    <property type="entry name" value="GlpK"/>
    <property type="match status" value="1"/>
</dbReference>
<dbReference type="SUPFAM" id="SSF53067">
    <property type="entry name" value="Actin-like ATPase domain"/>
    <property type="match status" value="2"/>
</dbReference>
<dbReference type="PROSITE" id="PS00933">
    <property type="entry name" value="FGGY_KINASES_1"/>
    <property type="match status" value="1"/>
</dbReference>
<dbReference type="PROSITE" id="PS00445">
    <property type="entry name" value="FGGY_KINASES_2"/>
    <property type="match status" value="1"/>
</dbReference>
<protein>
    <recommendedName>
        <fullName evidence="1">Glycerol kinase</fullName>
        <ecNumber evidence="1">2.7.1.30</ecNumber>
    </recommendedName>
    <alternativeName>
        <fullName evidence="1">ATP:glycerol 3-phosphotransferase</fullName>
    </alternativeName>
    <alternativeName>
        <fullName evidence="1">Glycerokinase</fullName>
        <shortName evidence="1">GK</shortName>
    </alternativeName>
</protein>
<evidence type="ECO:0000255" key="1">
    <source>
        <dbReference type="HAMAP-Rule" id="MF_00186"/>
    </source>
</evidence>